<comment type="function">
    <text evidence="1">NQR complex catalyzes the reduction of ubiquinone-1 to ubiquinol by two successive reactions, coupled with the transport of Na(+) ions from the cytoplasm to the periplasm. NqrA to NqrE are probably involved in the second step, the conversion of ubisemiquinone to ubiquinol.</text>
</comment>
<comment type="catalytic activity">
    <reaction evidence="1">
        <text>a ubiquinone + n Na(+)(in) + NADH + H(+) = a ubiquinol + n Na(+)(out) + NAD(+)</text>
        <dbReference type="Rhea" id="RHEA:47748"/>
        <dbReference type="Rhea" id="RHEA-COMP:9565"/>
        <dbReference type="Rhea" id="RHEA-COMP:9566"/>
        <dbReference type="ChEBI" id="CHEBI:15378"/>
        <dbReference type="ChEBI" id="CHEBI:16389"/>
        <dbReference type="ChEBI" id="CHEBI:17976"/>
        <dbReference type="ChEBI" id="CHEBI:29101"/>
        <dbReference type="ChEBI" id="CHEBI:57540"/>
        <dbReference type="ChEBI" id="CHEBI:57945"/>
        <dbReference type="EC" id="7.2.1.1"/>
    </reaction>
</comment>
<comment type="cofactor">
    <cofactor evidence="1">
        <name>FMN</name>
        <dbReference type="ChEBI" id="CHEBI:58210"/>
    </cofactor>
</comment>
<comment type="subunit">
    <text evidence="1">Composed of six subunits; NqrA, NqrB, NqrC, NqrD, NqrE and NqrF.</text>
</comment>
<comment type="subcellular location">
    <subcellularLocation>
        <location evidence="1">Cell inner membrane</location>
        <topology evidence="1">Single-pass membrane protein</topology>
    </subcellularLocation>
</comment>
<comment type="similarity">
    <text evidence="1">Belongs to the NqrC family.</text>
</comment>
<dbReference type="EC" id="7.2.1.1" evidence="1"/>
<dbReference type="EMBL" id="AE015925">
    <property type="protein sequence ID" value="AAP05112.1"/>
    <property type="molecule type" value="Genomic_DNA"/>
</dbReference>
<dbReference type="RefSeq" id="WP_011006329.1">
    <property type="nucleotide sequence ID" value="NC_003361.3"/>
</dbReference>
<dbReference type="SMR" id="Q823P3"/>
<dbReference type="STRING" id="227941.CCA_00364"/>
<dbReference type="KEGG" id="cca:CCA_00364"/>
<dbReference type="eggNOG" id="COG2869">
    <property type="taxonomic scope" value="Bacteria"/>
</dbReference>
<dbReference type="HOGENOM" id="CLU_870677_0_0_0"/>
<dbReference type="OrthoDB" id="9794010at2"/>
<dbReference type="Proteomes" id="UP000002193">
    <property type="component" value="Chromosome"/>
</dbReference>
<dbReference type="GO" id="GO:0005886">
    <property type="term" value="C:plasma membrane"/>
    <property type="evidence" value="ECO:0007669"/>
    <property type="project" value="UniProtKB-SubCell"/>
</dbReference>
<dbReference type="GO" id="GO:0010181">
    <property type="term" value="F:FMN binding"/>
    <property type="evidence" value="ECO:0007669"/>
    <property type="project" value="UniProtKB-UniRule"/>
</dbReference>
<dbReference type="GO" id="GO:0016655">
    <property type="term" value="F:oxidoreductase activity, acting on NAD(P)H, quinone or similar compound as acceptor"/>
    <property type="evidence" value="ECO:0007669"/>
    <property type="project" value="UniProtKB-UniRule"/>
</dbReference>
<dbReference type="GO" id="GO:0006814">
    <property type="term" value="P:sodium ion transport"/>
    <property type="evidence" value="ECO:0007669"/>
    <property type="project" value="UniProtKB-UniRule"/>
</dbReference>
<dbReference type="HAMAP" id="MF_00427">
    <property type="entry name" value="NqrC"/>
    <property type="match status" value="1"/>
</dbReference>
<dbReference type="InterPro" id="IPR007329">
    <property type="entry name" value="FMN-bd"/>
</dbReference>
<dbReference type="InterPro" id="IPR010204">
    <property type="entry name" value="NqrC"/>
</dbReference>
<dbReference type="NCBIfam" id="TIGR01938">
    <property type="entry name" value="nqrC"/>
    <property type="match status" value="1"/>
</dbReference>
<dbReference type="NCBIfam" id="NF003751">
    <property type="entry name" value="PRK05346.2-2"/>
    <property type="match status" value="1"/>
</dbReference>
<dbReference type="PANTHER" id="PTHR37838">
    <property type="entry name" value="NA(+)-TRANSLOCATING NADH-QUINONE REDUCTASE SUBUNIT C"/>
    <property type="match status" value="1"/>
</dbReference>
<dbReference type="PANTHER" id="PTHR37838:SF1">
    <property type="entry name" value="NA(+)-TRANSLOCATING NADH-QUINONE REDUCTASE SUBUNIT C"/>
    <property type="match status" value="1"/>
</dbReference>
<dbReference type="Pfam" id="PF04205">
    <property type="entry name" value="FMN_bind"/>
    <property type="match status" value="1"/>
</dbReference>
<dbReference type="PIRSF" id="PIRSF009437">
    <property type="entry name" value="NQR-1_subunit_C"/>
    <property type="match status" value="1"/>
</dbReference>
<dbReference type="SMART" id="SM00900">
    <property type="entry name" value="FMN_bind"/>
    <property type="match status" value="1"/>
</dbReference>
<feature type="chain" id="PRO_0000214211" description="Na(+)-translocating NADH-quinone reductase subunit C">
    <location>
        <begin position="1"/>
        <end position="319"/>
    </location>
</feature>
<feature type="transmembrane region" description="Helical" evidence="1">
    <location>
        <begin position="14"/>
        <end position="34"/>
    </location>
</feature>
<feature type="modified residue" description="FMN phosphoryl threonine" evidence="1">
    <location>
        <position position="283"/>
    </location>
</feature>
<protein>
    <recommendedName>
        <fullName evidence="1">Na(+)-translocating NADH-quinone reductase subunit C</fullName>
        <shortName evidence="1">Na(+)-NQR subunit C</shortName>
        <shortName evidence="1">Na(+)-translocating NQR subunit C</shortName>
        <ecNumber evidence="1">7.2.1.1</ecNumber>
    </recommendedName>
    <alternativeName>
        <fullName evidence="1">NQR complex subunit C</fullName>
    </alternativeName>
    <alternativeName>
        <fullName evidence="1">NQR-1 subunit C</fullName>
    </alternativeName>
</protein>
<sequence length="319" mass="35262">MSSEKPKPHLNKTWYVILFIFALSLFSSVFLSTVYYILAPFEERAAIFDRDQQMLTAAHVLDFSGKFQIYEEGSWQPAVYDKKSHLLKVADQHAPVVTSSVLDAYTQGFVRPLLADKLGQMFSFEEKNINVTEFIEKHQNGHFYQQPLLLFYVILANTEQARAMSAADVIKNPSVVRAIIIPISGFGLWGPIYGYLAVENNGDTVLGTAWYQQAETPGLGANIANPQWQKQFYGKKIFLQAAAGNTDFATTPLGLEVIKGSVQSAFGTTPKALSSIDGISGATLTCNGVTEAYAQSLAPYRNLLISFAKLNQRDHNGSK</sequence>
<reference key="1">
    <citation type="journal article" date="2003" name="Nucleic Acids Res.">
        <title>Genome sequence of Chlamydophila caviae (Chlamydia psittaci GPIC): examining the role of niche-specific genes in the evolution of the Chlamydiaceae.</title>
        <authorList>
            <person name="Read T.D."/>
            <person name="Myers G.S.A."/>
            <person name="Brunham R.C."/>
            <person name="Nelson W.C."/>
            <person name="Paulsen I.T."/>
            <person name="Heidelberg J.F."/>
            <person name="Holtzapple E.K."/>
            <person name="Khouri H.M."/>
            <person name="Federova N.B."/>
            <person name="Carty H.A."/>
            <person name="Umayam L.A."/>
            <person name="Haft D.H."/>
            <person name="Peterson J.D."/>
            <person name="Beanan M.J."/>
            <person name="White O."/>
            <person name="Salzberg S.L."/>
            <person name="Hsia R.-C."/>
            <person name="McClarty G."/>
            <person name="Rank R.G."/>
            <person name="Bavoil P.M."/>
            <person name="Fraser C.M."/>
        </authorList>
    </citation>
    <scope>NUCLEOTIDE SEQUENCE [LARGE SCALE GENOMIC DNA]</scope>
    <source>
        <strain>ATCC VR-813 / DSM 19441 / 03DC25 / GPIC</strain>
    </source>
</reference>
<keyword id="KW-0997">Cell inner membrane</keyword>
<keyword id="KW-1003">Cell membrane</keyword>
<keyword id="KW-0285">Flavoprotein</keyword>
<keyword id="KW-0288">FMN</keyword>
<keyword id="KW-0406">Ion transport</keyword>
<keyword id="KW-0472">Membrane</keyword>
<keyword id="KW-0520">NAD</keyword>
<keyword id="KW-0597">Phosphoprotein</keyword>
<keyword id="KW-0915">Sodium</keyword>
<keyword id="KW-0739">Sodium transport</keyword>
<keyword id="KW-1278">Translocase</keyword>
<keyword id="KW-0812">Transmembrane</keyword>
<keyword id="KW-1133">Transmembrane helix</keyword>
<keyword id="KW-0813">Transport</keyword>
<keyword id="KW-0830">Ubiquinone</keyword>
<gene>
    <name evidence="1" type="primary">nqrC</name>
    <name type="ordered locus">CCA_00364</name>
</gene>
<proteinExistence type="inferred from homology"/>
<organism>
    <name type="scientific">Chlamydia caviae (strain ATCC VR-813 / DSM 19441 / 03DC25 / GPIC)</name>
    <name type="common">Chlamydophila caviae</name>
    <dbReference type="NCBI Taxonomy" id="227941"/>
    <lineage>
        <taxon>Bacteria</taxon>
        <taxon>Pseudomonadati</taxon>
        <taxon>Chlamydiota</taxon>
        <taxon>Chlamydiia</taxon>
        <taxon>Chlamydiales</taxon>
        <taxon>Chlamydiaceae</taxon>
        <taxon>Chlamydia/Chlamydophila group</taxon>
        <taxon>Chlamydia</taxon>
    </lineage>
</organism>
<evidence type="ECO:0000255" key="1">
    <source>
        <dbReference type="HAMAP-Rule" id="MF_00427"/>
    </source>
</evidence>
<accession>Q823P3</accession>
<name>NQRC_CHLCV</name>